<comment type="similarity">
    <text evidence="1">Belongs to the universal ribosomal protein uS2 family.</text>
</comment>
<reference key="1">
    <citation type="journal article" date="2009" name="PLoS Genet.">
        <title>Organised genome dynamics in the Escherichia coli species results in highly diverse adaptive paths.</title>
        <authorList>
            <person name="Touchon M."/>
            <person name="Hoede C."/>
            <person name="Tenaillon O."/>
            <person name="Barbe V."/>
            <person name="Baeriswyl S."/>
            <person name="Bidet P."/>
            <person name="Bingen E."/>
            <person name="Bonacorsi S."/>
            <person name="Bouchier C."/>
            <person name="Bouvet O."/>
            <person name="Calteau A."/>
            <person name="Chiapello H."/>
            <person name="Clermont O."/>
            <person name="Cruveiller S."/>
            <person name="Danchin A."/>
            <person name="Diard M."/>
            <person name="Dossat C."/>
            <person name="Karoui M.E."/>
            <person name="Frapy E."/>
            <person name="Garry L."/>
            <person name="Ghigo J.M."/>
            <person name="Gilles A.M."/>
            <person name="Johnson J."/>
            <person name="Le Bouguenec C."/>
            <person name="Lescat M."/>
            <person name="Mangenot S."/>
            <person name="Martinez-Jehanne V."/>
            <person name="Matic I."/>
            <person name="Nassif X."/>
            <person name="Oztas S."/>
            <person name="Petit M.A."/>
            <person name="Pichon C."/>
            <person name="Rouy Z."/>
            <person name="Ruf C.S."/>
            <person name="Schneider D."/>
            <person name="Tourret J."/>
            <person name="Vacherie B."/>
            <person name="Vallenet D."/>
            <person name="Medigue C."/>
            <person name="Rocha E.P.C."/>
            <person name="Denamur E."/>
        </authorList>
    </citation>
    <scope>NUCLEOTIDE SEQUENCE [LARGE SCALE GENOMIC DNA]</scope>
    <source>
        <strain>ED1a</strain>
    </source>
</reference>
<evidence type="ECO:0000255" key="1">
    <source>
        <dbReference type="HAMAP-Rule" id="MF_00291"/>
    </source>
</evidence>
<evidence type="ECO:0000305" key="2"/>
<sequence>MATVSMRDMLKAGVHFGHQTRYWNPKMKPFIFGARNKVHIINLEKTVPMFNEALAELNKIASRKGKILFVGTKRAASEAVKDAALSCDQFFVNHRWLGGMLTNWKTVRQSIKRLKDLETQSQDGTFDKLTKKEALMRTRELEKLENSLGGIKDMGGLPDALFVIDADHEHIAIKEANNLGIPVFAIVDTNSDPDGVDFVIPGNDDAIRAVTLYLGAVAATVREGRSQDLASQAEESFVEAE</sequence>
<gene>
    <name evidence="1" type="primary">rpsB</name>
    <name type="ordered locus">ECED1_0175</name>
</gene>
<accession>B7MP29</accession>
<protein>
    <recommendedName>
        <fullName evidence="1">Small ribosomal subunit protein uS2</fullName>
    </recommendedName>
    <alternativeName>
        <fullName evidence="2">30S ribosomal protein S2</fullName>
    </alternativeName>
</protein>
<name>RS2_ECO81</name>
<keyword id="KW-0687">Ribonucleoprotein</keyword>
<keyword id="KW-0689">Ribosomal protein</keyword>
<dbReference type="EMBL" id="CU928162">
    <property type="protein sequence ID" value="CAR06394.1"/>
    <property type="molecule type" value="Genomic_DNA"/>
</dbReference>
<dbReference type="RefSeq" id="WP_000246882.1">
    <property type="nucleotide sequence ID" value="NC_011745.1"/>
</dbReference>
<dbReference type="SMR" id="B7MP29"/>
<dbReference type="GeneID" id="89519558"/>
<dbReference type="KEGG" id="ecq:ECED1_0175"/>
<dbReference type="HOGENOM" id="CLU_040318_1_2_6"/>
<dbReference type="Proteomes" id="UP000000748">
    <property type="component" value="Chromosome"/>
</dbReference>
<dbReference type="GO" id="GO:0022627">
    <property type="term" value="C:cytosolic small ribosomal subunit"/>
    <property type="evidence" value="ECO:0007669"/>
    <property type="project" value="TreeGrafter"/>
</dbReference>
<dbReference type="GO" id="GO:0003735">
    <property type="term" value="F:structural constituent of ribosome"/>
    <property type="evidence" value="ECO:0007669"/>
    <property type="project" value="InterPro"/>
</dbReference>
<dbReference type="GO" id="GO:0006412">
    <property type="term" value="P:translation"/>
    <property type="evidence" value="ECO:0007669"/>
    <property type="project" value="UniProtKB-UniRule"/>
</dbReference>
<dbReference type="CDD" id="cd01425">
    <property type="entry name" value="RPS2"/>
    <property type="match status" value="1"/>
</dbReference>
<dbReference type="FunFam" id="1.10.287.610:FF:000001">
    <property type="entry name" value="30S ribosomal protein S2"/>
    <property type="match status" value="1"/>
</dbReference>
<dbReference type="Gene3D" id="3.40.50.10490">
    <property type="entry name" value="Glucose-6-phosphate isomerase like protein, domain 1"/>
    <property type="match status" value="1"/>
</dbReference>
<dbReference type="Gene3D" id="1.10.287.610">
    <property type="entry name" value="Helix hairpin bin"/>
    <property type="match status" value="1"/>
</dbReference>
<dbReference type="HAMAP" id="MF_00291_B">
    <property type="entry name" value="Ribosomal_uS2_B"/>
    <property type="match status" value="1"/>
</dbReference>
<dbReference type="InterPro" id="IPR001865">
    <property type="entry name" value="Ribosomal_uS2"/>
</dbReference>
<dbReference type="InterPro" id="IPR005706">
    <property type="entry name" value="Ribosomal_uS2_bac/mit/plastid"/>
</dbReference>
<dbReference type="InterPro" id="IPR018130">
    <property type="entry name" value="Ribosomal_uS2_CS"/>
</dbReference>
<dbReference type="InterPro" id="IPR023591">
    <property type="entry name" value="Ribosomal_uS2_flav_dom_sf"/>
</dbReference>
<dbReference type="NCBIfam" id="TIGR01011">
    <property type="entry name" value="rpsB_bact"/>
    <property type="match status" value="1"/>
</dbReference>
<dbReference type="PANTHER" id="PTHR12534">
    <property type="entry name" value="30S RIBOSOMAL PROTEIN S2 PROKARYOTIC AND ORGANELLAR"/>
    <property type="match status" value="1"/>
</dbReference>
<dbReference type="PANTHER" id="PTHR12534:SF0">
    <property type="entry name" value="SMALL RIBOSOMAL SUBUNIT PROTEIN US2M"/>
    <property type="match status" value="1"/>
</dbReference>
<dbReference type="Pfam" id="PF00318">
    <property type="entry name" value="Ribosomal_S2"/>
    <property type="match status" value="1"/>
</dbReference>
<dbReference type="PRINTS" id="PR00395">
    <property type="entry name" value="RIBOSOMALS2"/>
</dbReference>
<dbReference type="SUPFAM" id="SSF52313">
    <property type="entry name" value="Ribosomal protein S2"/>
    <property type="match status" value="1"/>
</dbReference>
<dbReference type="PROSITE" id="PS00962">
    <property type="entry name" value="RIBOSOMAL_S2_1"/>
    <property type="match status" value="1"/>
</dbReference>
<dbReference type="PROSITE" id="PS00963">
    <property type="entry name" value="RIBOSOMAL_S2_2"/>
    <property type="match status" value="1"/>
</dbReference>
<proteinExistence type="inferred from homology"/>
<feature type="chain" id="PRO_1000132646" description="Small ribosomal subunit protein uS2">
    <location>
        <begin position="1"/>
        <end position="241"/>
    </location>
</feature>
<organism>
    <name type="scientific">Escherichia coli O81 (strain ED1a)</name>
    <dbReference type="NCBI Taxonomy" id="585397"/>
    <lineage>
        <taxon>Bacteria</taxon>
        <taxon>Pseudomonadati</taxon>
        <taxon>Pseudomonadota</taxon>
        <taxon>Gammaproteobacteria</taxon>
        <taxon>Enterobacterales</taxon>
        <taxon>Enterobacteriaceae</taxon>
        <taxon>Escherichia</taxon>
    </lineage>
</organism>